<reference key="1">
    <citation type="journal article" date="2004" name="Proc. Natl. Acad. Sci. U.S.A.">
        <title>Genomic plasticity of the causative agent of melioidosis, Burkholderia pseudomallei.</title>
        <authorList>
            <person name="Holden M.T.G."/>
            <person name="Titball R.W."/>
            <person name="Peacock S.J."/>
            <person name="Cerdeno-Tarraga A.-M."/>
            <person name="Atkins T."/>
            <person name="Crossman L.C."/>
            <person name="Pitt T."/>
            <person name="Churcher C."/>
            <person name="Mungall K.L."/>
            <person name="Bentley S.D."/>
            <person name="Sebaihia M."/>
            <person name="Thomson N.R."/>
            <person name="Bason N."/>
            <person name="Beacham I.R."/>
            <person name="Brooks K."/>
            <person name="Brown K.A."/>
            <person name="Brown N.F."/>
            <person name="Challis G.L."/>
            <person name="Cherevach I."/>
            <person name="Chillingworth T."/>
            <person name="Cronin A."/>
            <person name="Crossett B."/>
            <person name="Davis P."/>
            <person name="DeShazer D."/>
            <person name="Feltwell T."/>
            <person name="Fraser A."/>
            <person name="Hance Z."/>
            <person name="Hauser H."/>
            <person name="Holroyd S."/>
            <person name="Jagels K."/>
            <person name="Keith K.E."/>
            <person name="Maddison M."/>
            <person name="Moule S."/>
            <person name="Price C."/>
            <person name="Quail M.A."/>
            <person name="Rabbinowitsch E."/>
            <person name="Rutherford K."/>
            <person name="Sanders M."/>
            <person name="Simmonds M."/>
            <person name="Songsivilai S."/>
            <person name="Stevens K."/>
            <person name="Tumapa S."/>
            <person name="Vesaratchavest M."/>
            <person name="Whitehead S."/>
            <person name="Yeats C."/>
            <person name="Barrell B.G."/>
            <person name="Oyston P.C.F."/>
            <person name="Parkhill J."/>
        </authorList>
    </citation>
    <scope>NUCLEOTIDE SEQUENCE [LARGE SCALE GENOMIC DNA]</scope>
    <source>
        <strain>K96243</strain>
    </source>
</reference>
<dbReference type="EC" id="6.1.1.20" evidence="1"/>
<dbReference type="EMBL" id="BX571965">
    <property type="protein sequence ID" value="CAH35939.1"/>
    <property type="molecule type" value="Genomic_DNA"/>
</dbReference>
<dbReference type="RefSeq" id="WP_004193113.1">
    <property type="nucleotide sequence ID" value="NZ_CP009538.1"/>
</dbReference>
<dbReference type="RefSeq" id="YP_108539.1">
    <property type="nucleotide sequence ID" value="NC_006350.1"/>
</dbReference>
<dbReference type="SMR" id="Q63TM7"/>
<dbReference type="STRING" id="272560.BPSL1940"/>
<dbReference type="GeneID" id="92978834"/>
<dbReference type="KEGG" id="bps:BPSL1940"/>
<dbReference type="PATRIC" id="fig|272560.51.peg.4084"/>
<dbReference type="eggNOG" id="COG0072">
    <property type="taxonomic scope" value="Bacteria"/>
</dbReference>
<dbReference type="eggNOG" id="COG0073">
    <property type="taxonomic scope" value="Bacteria"/>
</dbReference>
<dbReference type="Proteomes" id="UP000000605">
    <property type="component" value="Chromosome 1"/>
</dbReference>
<dbReference type="GO" id="GO:0009328">
    <property type="term" value="C:phenylalanine-tRNA ligase complex"/>
    <property type="evidence" value="ECO:0007669"/>
    <property type="project" value="TreeGrafter"/>
</dbReference>
<dbReference type="GO" id="GO:0005524">
    <property type="term" value="F:ATP binding"/>
    <property type="evidence" value="ECO:0007669"/>
    <property type="project" value="UniProtKB-UniRule"/>
</dbReference>
<dbReference type="GO" id="GO:0000287">
    <property type="term" value="F:magnesium ion binding"/>
    <property type="evidence" value="ECO:0007669"/>
    <property type="project" value="UniProtKB-UniRule"/>
</dbReference>
<dbReference type="GO" id="GO:0004826">
    <property type="term" value="F:phenylalanine-tRNA ligase activity"/>
    <property type="evidence" value="ECO:0007669"/>
    <property type="project" value="UniProtKB-UniRule"/>
</dbReference>
<dbReference type="GO" id="GO:0000049">
    <property type="term" value="F:tRNA binding"/>
    <property type="evidence" value="ECO:0007669"/>
    <property type="project" value="UniProtKB-KW"/>
</dbReference>
<dbReference type="GO" id="GO:0006432">
    <property type="term" value="P:phenylalanyl-tRNA aminoacylation"/>
    <property type="evidence" value="ECO:0007669"/>
    <property type="project" value="UniProtKB-UniRule"/>
</dbReference>
<dbReference type="CDD" id="cd00769">
    <property type="entry name" value="PheRS_beta_core"/>
    <property type="match status" value="1"/>
</dbReference>
<dbReference type="CDD" id="cd02796">
    <property type="entry name" value="tRNA_bind_bactPheRS"/>
    <property type="match status" value="1"/>
</dbReference>
<dbReference type="FunFam" id="2.40.50.140:FF:000045">
    <property type="entry name" value="Phenylalanine--tRNA ligase beta subunit"/>
    <property type="match status" value="1"/>
</dbReference>
<dbReference type="FunFam" id="3.30.56.10:FF:000002">
    <property type="entry name" value="Phenylalanine--tRNA ligase beta subunit"/>
    <property type="match status" value="1"/>
</dbReference>
<dbReference type="FunFam" id="3.30.930.10:FF:000022">
    <property type="entry name" value="Phenylalanine--tRNA ligase beta subunit"/>
    <property type="match status" value="1"/>
</dbReference>
<dbReference type="Gene3D" id="3.30.56.10">
    <property type="match status" value="2"/>
</dbReference>
<dbReference type="Gene3D" id="3.30.930.10">
    <property type="entry name" value="Bira Bifunctional Protein, Domain 2"/>
    <property type="match status" value="1"/>
</dbReference>
<dbReference type="Gene3D" id="3.30.70.380">
    <property type="entry name" value="Ferrodoxin-fold anticodon-binding domain"/>
    <property type="match status" value="1"/>
</dbReference>
<dbReference type="Gene3D" id="2.40.50.140">
    <property type="entry name" value="Nucleic acid-binding proteins"/>
    <property type="match status" value="1"/>
</dbReference>
<dbReference type="Gene3D" id="3.50.40.10">
    <property type="entry name" value="Phenylalanyl-trna Synthetase, Chain B, domain 3"/>
    <property type="match status" value="1"/>
</dbReference>
<dbReference type="HAMAP" id="MF_00283">
    <property type="entry name" value="Phe_tRNA_synth_beta1"/>
    <property type="match status" value="1"/>
</dbReference>
<dbReference type="InterPro" id="IPR045864">
    <property type="entry name" value="aa-tRNA-synth_II/BPL/LPL"/>
</dbReference>
<dbReference type="InterPro" id="IPR005146">
    <property type="entry name" value="B3/B4_tRNA-bd"/>
</dbReference>
<dbReference type="InterPro" id="IPR009061">
    <property type="entry name" value="DNA-bd_dom_put_sf"/>
</dbReference>
<dbReference type="InterPro" id="IPR005121">
    <property type="entry name" value="Fdx_antiC-bd"/>
</dbReference>
<dbReference type="InterPro" id="IPR036690">
    <property type="entry name" value="Fdx_antiC-bd_sf"/>
</dbReference>
<dbReference type="InterPro" id="IPR012340">
    <property type="entry name" value="NA-bd_OB-fold"/>
</dbReference>
<dbReference type="InterPro" id="IPR045060">
    <property type="entry name" value="Phe-tRNA-ligase_IIc_bsu"/>
</dbReference>
<dbReference type="InterPro" id="IPR004532">
    <property type="entry name" value="Phe-tRNA-ligase_IIc_bsu_bact"/>
</dbReference>
<dbReference type="InterPro" id="IPR020825">
    <property type="entry name" value="Phe-tRNA_synthase-like_B3/B4"/>
</dbReference>
<dbReference type="InterPro" id="IPR041616">
    <property type="entry name" value="PheRS_beta_core"/>
</dbReference>
<dbReference type="InterPro" id="IPR002547">
    <property type="entry name" value="tRNA-bd_dom"/>
</dbReference>
<dbReference type="InterPro" id="IPR033714">
    <property type="entry name" value="tRNA_bind_bactPheRS"/>
</dbReference>
<dbReference type="InterPro" id="IPR005147">
    <property type="entry name" value="tRNA_synthase_B5-dom"/>
</dbReference>
<dbReference type="NCBIfam" id="TIGR00472">
    <property type="entry name" value="pheT_bact"/>
    <property type="match status" value="1"/>
</dbReference>
<dbReference type="NCBIfam" id="NF045760">
    <property type="entry name" value="YtpR"/>
    <property type="match status" value="1"/>
</dbReference>
<dbReference type="PANTHER" id="PTHR10947:SF0">
    <property type="entry name" value="PHENYLALANINE--TRNA LIGASE BETA SUBUNIT"/>
    <property type="match status" value="1"/>
</dbReference>
<dbReference type="PANTHER" id="PTHR10947">
    <property type="entry name" value="PHENYLALANYL-TRNA SYNTHETASE BETA CHAIN AND LEUCINE-RICH REPEAT-CONTAINING PROTEIN 47"/>
    <property type="match status" value="1"/>
</dbReference>
<dbReference type="Pfam" id="PF03483">
    <property type="entry name" value="B3_4"/>
    <property type="match status" value="1"/>
</dbReference>
<dbReference type="Pfam" id="PF03484">
    <property type="entry name" value="B5"/>
    <property type="match status" value="1"/>
</dbReference>
<dbReference type="Pfam" id="PF03147">
    <property type="entry name" value="FDX-ACB"/>
    <property type="match status" value="1"/>
</dbReference>
<dbReference type="Pfam" id="PF01588">
    <property type="entry name" value="tRNA_bind"/>
    <property type="match status" value="1"/>
</dbReference>
<dbReference type="Pfam" id="PF17759">
    <property type="entry name" value="tRNA_synthFbeta"/>
    <property type="match status" value="1"/>
</dbReference>
<dbReference type="SMART" id="SM00873">
    <property type="entry name" value="B3_4"/>
    <property type="match status" value="1"/>
</dbReference>
<dbReference type="SMART" id="SM00874">
    <property type="entry name" value="B5"/>
    <property type="match status" value="1"/>
</dbReference>
<dbReference type="SMART" id="SM00896">
    <property type="entry name" value="FDX-ACB"/>
    <property type="match status" value="1"/>
</dbReference>
<dbReference type="SUPFAM" id="SSF54991">
    <property type="entry name" value="Anticodon-binding domain of PheRS"/>
    <property type="match status" value="1"/>
</dbReference>
<dbReference type="SUPFAM" id="SSF55681">
    <property type="entry name" value="Class II aaRS and biotin synthetases"/>
    <property type="match status" value="1"/>
</dbReference>
<dbReference type="SUPFAM" id="SSF50249">
    <property type="entry name" value="Nucleic acid-binding proteins"/>
    <property type="match status" value="1"/>
</dbReference>
<dbReference type="SUPFAM" id="SSF56037">
    <property type="entry name" value="PheT/TilS domain"/>
    <property type="match status" value="1"/>
</dbReference>
<dbReference type="SUPFAM" id="SSF46955">
    <property type="entry name" value="Putative DNA-binding domain"/>
    <property type="match status" value="1"/>
</dbReference>
<dbReference type="PROSITE" id="PS51483">
    <property type="entry name" value="B5"/>
    <property type="match status" value="1"/>
</dbReference>
<dbReference type="PROSITE" id="PS51447">
    <property type="entry name" value="FDX_ACB"/>
    <property type="match status" value="1"/>
</dbReference>
<dbReference type="PROSITE" id="PS50886">
    <property type="entry name" value="TRBD"/>
    <property type="match status" value="1"/>
</dbReference>
<evidence type="ECO:0000255" key="1">
    <source>
        <dbReference type="HAMAP-Rule" id="MF_00283"/>
    </source>
</evidence>
<accession>Q63TM7</accession>
<protein>
    <recommendedName>
        <fullName evidence="1">Phenylalanine--tRNA ligase beta subunit</fullName>
        <ecNumber evidence="1">6.1.1.20</ecNumber>
    </recommendedName>
    <alternativeName>
        <fullName evidence="1">Phenylalanyl-tRNA synthetase beta subunit</fullName>
        <shortName evidence="1">PheRS</shortName>
    </alternativeName>
</protein>
<proteinExistence type="inferred from homology"/>
<organism>
    <name type="scientific">Burkholderia pseudomallei (strain K96243)</name>
    <dbReference type="NCBI Taxonomy" id="272560"/>
    <lineage>
        <taxon>Bacteria</taxon>
        <taxon>Pseudomonadati</taxon>
        <taxon>Pseudomonadota</taxon>
        <taxon>Betaproteobacteria</taxon>
        <taxon>Burkholderiales</taxon>
        <taxon>Burkholderiaceae</taxon>
        <taxon>Burkholderia</taxon>
        <taxon>pseudomallei group</taxon>
    </lineage>
</organism>
<comment type="catalytic activity">
    <reaction evidence="1">
        <text>tRNA(Phe) + L-phenylalanine + ATP = L-phenylalanyl-tRNA(Phe) + AMP + diphosphate + H(+)</text>
        <dbReference type="Rhea" id="RHEA:19413"/>
        <dbReference type="Rhea" id="RHEA-COMP:9668"/>
        <dbReference type="Rhea" id="RHEA-COMP:9699"/>
        <dbReference type="ChEBI" id="CHEBI:15378"/>
        <dbReference type="ChEBI" id="CHEBI:30616"/>
        <dbReference type="ChEBI" id="CHEBI:33019"/>
        <dbReference type="ChEBI" id="CHEBI:58095"/>
        <dbReference type="ChEBI" id="CHEBI:78442"/>
        <dbReference type="ChEBI" id="CHEBI:78531"/>
        <dbReference type="ChEBI" id="CHEBI:456215"/>
        <dbReference type="EC" id="6.1.1.20"/>
    </reaction>
</comment>
<comment type="cofactor">
    <cofactor evidence="1">
        <name>Mg(2+)</name>
        <dbReference type="ChEBI" id="CHEBI:18420"/>
    </cofactor>
    <text evidence="1">Binds 2 magnesium ions per tetramer.</text>
</comment>
<comment type="subunit">
    <text evidence="1">Tetramer of two alpha and two beta subunits.</text>
</comment>
<comment type="subcellular location">
    <subcellularLocation>
        <location evidence="1">Cytoplasm</location>
    </subcellularLocation>
</comment>
<comment type="similarity">
    <text evidence="1">Belongs to the phenylalanyl-tRNA synthetase beta subunit family. Type 1 subfamily.</text>
</comment>
<feature type="chain" id="PRO_0000126860" description="Phenylalanine--tRNA ligase beta subunit">
    <location>
        <begin position="1"/>
        <end position="810"/>
    </location>
</feature>
<feature type="domain" description="tRNA-binding" evidence="1">
    <location>
        <begin position="39"/>
        <end position="154"/>
    </location>
</feature>
<feature type="domain" description="B5" evidence="1">
    <location>
        <begin position="405"/>
        <end position="480"/>
    </location>
</feature>
<feature type="domain" description="FDX-ACB" evidence="1">
    <location>
        <begin position="707"/>
        <end position="809"/>
    </location>
</feature>
<feature type="binding site" evidence="1">
    <location>
        <position position="458"/>
    </location>
    <ligand>
        <name>Mg(2+)</name>
        <dbReference type="ChEBI" id="CHEBI:18420"/>
        <note>shared with alpha subunit</note>
    </ligand>
</feature>
<feature type="binding site" evidence="1">
    <location>
        <position position="464"/>
    </location>
    <ligand>
        <name>Mg(2+)</name>
        <dbReference type="ChEBI" id="CHEBI:18420"/>
        <note>shared with alpha subunit</note>
    </ligand>
</feature>
<feature type="binding site" evidence="1">
    <location>
        <position position="467"/>
    </location>
    <ligand>
        <name>Mg(2+)</name>
        <dbReference type="ChEBI" id="CHEBI:18420"/>
        <note>shared with alpha subunit</note>
    </ligand>
</feature>
<feature type="binding site" evidence="1">
    <location>
        <position position="468"/>
    </location>
    <ligand>
        <name>Mg(2+)</name>
        <dbReference type="ChEBI" id="CHEBI:18420"/>
        <note>shared with alpha subunit</note>
    </ligand>
</feature>
<name>SYFB_BURPS</name>
<gene>
    <name evidence="1" type="primary">pheT</name>
    <name type="ordered locus">BPSL1940</name>
</gene>
<keyword id="KW-0030">Aminoacyl-tRNA synthetase</keyword>
<keyword id="KW-0067">ATP-binding</keyword>
<keyword id="KW-0963">Cytoplasm</keyword>
<keyword id="KW-0436">Ligase</keyword>
<keyword id="KW-0460">Magnesium</keyword>
<keyword id="KW-0479">Metal-binding</keyword>
<keyword id="KW-0547">Nucleotide-binding</keyword>
<keyword id="KW-0648">Protein biosynthesis</keyword>
<keyword id="KW-1185">Reference proteome</keyword>
<keyword id="KW-0694">RNA-binding</keyword>
<keyword id="KW-0820">tRNA-binding</keyword>
<sequence length="810" mass="88620">MQFPESWLRTFVDPQLTTDELSHALTMAGLEVESLRPAAPPTEKIVVGRVLEVVKHPDADKLNVCQVDAGTGATLQIVCGAPNVAPGIKVPVALVGAKLPPAEEGGAPFAIKLSKLRGVESQGMLCSARELKLSEDHSGLMILPEGTPVGQDIREALNLDDTVFEIKLTPNKADCLSVFGIARETAAITGAPLAAPDIRPVLAELTETLPVKISAPDLCGRFSGRVIRGVNARAKTPHWMVERLERAGQRSVSALVDISNYVMFELGRPSHVFDLDKIHGGIDVRWGKRGESLKLLNGNTIELDETVGVISDGAQVESLAGIMGGDSTAVTLDTTNIYLEAAFWWPDSIRGRARKYNFSTDAAHRFERGVDYSTTVEHVERITQLILDICGGQAGPVDDQIVSLPQRAPVSMRASRANRIIGVEIGEDEIAQIFTRLGLAFERDGDVFRVTPPPHRFDIEIEEDLIEEVARIYGFEKIPARPPVAKSEMRATDETRRSVHAIRHALAARDYAETVNFSFVDAEWERDFAGNDNPVRLLNPIASQLSVMRTTLFGSLVGVLRHNLNRRAERVRVFEAGRVFVADPSVKAGELAVEGYAQPKRIGALAYGPVVEEQWGTATRQVDYFDVKGDLEALLAPVPARFVKAEHPALHPGRSARIEVDGHAVGWIGELHPRLMQKYELPHAPVMFEIDTDALVARALPAPSEVSKFPPVRRDIAVVVDQKVEVQALFDEMKKALADDACKFVQRVALFDEFRAKSNTSGGLSAHEKSLAFRVTLQDAAGTLQDETVDQAIQTLVDRMARVYGARLRG</sequence>